<evidence type="ECO:0000255" key="1">
    <source>
        <dbReference type="HAMAP-Rule" id="MF_00444"/>
    </source>
</evidence>
<accession>Q2YPX1</accession>
<gene>
    <name evidence="1" type="primary">clpP</name>
    <name type="ordered locus">BAB1_1132</name>
</gene>
<keyword id="KW-0963">Cytoplasm</keyword>
<keyword id="KW-0378">Hydrolase</keyword>
<keyword id="KW-0645">Protease</keyword>
<keyword id="KW-1185">Reference proteome</keyword>
<keyword id="KW-0720">Serine protease</keyword>
<name>CLPP_BRUA2</name>
<feature type="chain" id="PRO_0000226431" description="ATP-dependent Clp protease proteolytic subunit">
    <location>
        <begin position="1"/>
        <end position="209"/>
    </location>
</feature>
<feature type="active site" description="Nucleophile" evidence="1">
    <location>
        <position position="106"/>
    </location>
</feature>
<feature type="active site" evidence="1">
    <location>
        <position position="131"/>
    </location>
</feature>
<reference key="1">
    <citation type="journal article" date="2005" name="Infect. Immun.">
        <title>Whole-genome analyses of speciation events in pathogenic Brucellae.</title>
        <authorList>
            <person name="Chain P.S."/>
            <person name="Comerci D.J."/>
            <person name="Tolmasky M.E."/>
            <person name="Larimer F.W."/>
            <person name="Malfatti S.A."/>
            <person name="Vergez L.M."/>
            <person name="Aguero F."/>
            <person name="Land M.L."/>
            <person name="Ugalde R.A."/>
            <person name="Garcia E."/>
        </authorList>
    </citation>
    <scope>NUCLEOTIDE SEQUENCE [LARGE SCALE GENOMIC DNA]</scope>
    <source>
        <strain>2308</strain>
    </source>
</reference>
<sequence>MRDPIETVMNLVPMVVEQTNRGERAYDIFSRLLKERIIFVNGPVEDGMSMLVCAQLLFLEAENPKKEINMYINSPGGVVTSGMAIYDTMQFIRPPVSTLCMGQAASMGSLLLTAGATGHRYALPNARIMVHQPSGGFQGQASDIERHAQDIIKMKRRLNEIYVKHTGRDYDTIERTLDRDHFMTAQEALEFGLIDKVVEARDVSADESK</sequence>
<organism>
    <name type="scientific">Brucella abortus (strain 2308)</name>
    <dbReference type="NCBI Taxonomy" id="359391"/>
    <lineage>
        <taxon>Bacteria</taxon>
        <taxon>Pseudomonadati</taxon>
        <taxon>Pseudomonadota</taxon>
        <taxon>Alphaproteobacteria</taxon>
        <taxon>Hyphomicrobiales</taxon>
        <taxon>Brucellaceae</taxon>
        <taxon>Brucella/Ochrobactrum group</taxon>
        <taxon>Brucella</taxon>
    </lineage>
</organism>
<proteinExistence type="inferred from homology"/>
<protein>
    <recommendedName>
        <fullName evidence="1">ATP-dependent Clp protease proteolytic subunit</fullName>
        <ecNumber evidence="1">3.4.21.92</ecNumber>
    </recommendedName>
    <alternativeName>
        <fullName evidence="1">Endopeptidase Clp</fullName>
    </alternativeName>
</protein>
<comment type="function">
    <text evidence="1">Cleaves peptides in various proteins in a process that requires ATP hydrolysis. Has a chymotrypsin-like activity. Plays a major role in the degradation of misfolded proteins.</text>
</comment>
<comment type="catalytic activity">
    <reaction evidence="1">
        <text>Hydrolysis of proteins to small peptides in the presence of ATP and magnesium. alpha-casein is the usual test substrate. In the absence of ATP, only oligopeptides shorter than five residues are hydrolyzed (such as succinyl-Leu-Tyr-|-NHMec, and Leu-Tyr-Leu-|-Tyr-Trp, in which cleavage of the -Tyr-|-Leu- and -Tyr-|-Trp bonds also occurs).</text>
        <dbReference type="EC" id="3.4.21.92"/>
    </reaction>
</comment>
<comment type="subunit">
    <text evidence="1">Fourteen ClpP subunits assemble into 2 heptameric rings which stack back to back to give a disk-like structure with a central cavity, resembling the structure of eukaryotic proteasomes.</text>
</comment>
<comment type="subcellular location">
    <subcellularLocation>
        <location evidence="1">Cytoplasm</location>
    </subcellularLocation>
</comment>
<comment type="similarity">
    <text evidence="1">Belongs to the peptidase S14 family.</text>
</comment>
<dbReference type="EC" id="3.4.21.92" evidence="1"/>
<dbReference type="EMBL" id="AM040264">
    <property type="protein sequence ID" value="CAJ11088.1"/>
    <property type="molecule type" value="Genomic_DNA"/>
</dbReference>
<dbReference type="RefSeq" id="WP_002964237.1">
    <property type="nucleotide sequence ID" value="NZ_KN046823.1"/>
</dbReference>
<dbReference type="SMR" id="Q2YPX1"/>
<dbReference type="STRING" id="359391.BAB1_1132"/>
<dbReference type="MEROPS" id="S14.001"/>
<dbReference type="KEGG" id="bmf:BAB1_1132"/>
<dbReference type="PATRIC" id="fig|359391.11.peg.32"/>
<dbReference type="HOGENOM" id="CLU_058707_3_2_5"/>
<dbReference type="PhylomeDB" id="Q2YPX1"/>
<dbReference type="PRO" id="PR:Q2YPX1"/>
<dbReference type="Proteomes" id="UP000002719">
    <property type="component" value="Chromosome I"/>
</dbReference>
<dbReference type="GO" id="GO:0005737">
    <property type="term" value="C:cytoplasm"/>
    <property type="evidence" value="ECO:0007669"/>
    <property type="project" value="UniProtKB-SubCell"/>
</dbReference>
<dbReference type="GO" id="GO:0009368">
    <property type="term" value="C:endopeptidase Clp complex"/>
    <property type="evidence" value="ECO:0007669"/>
    <property type="project" value="TreeGrafter"/>
</dbReference>
<dbReference type="GO" id="GO:0004176">
    <property type="term" value="F:ATP-dependent peptidase activity"/>
    <property type="evidence" value="ECO:0007669"/>
    <property type="project" value="InterPro"/>
</dbReference>
<dbReference type="GO" id="GO:0051117">
    <property type="term" value="F:ATPase binding"/>
    <property type="evidence" value="ECO:0007669"/>
    <property type="project" value="TreeGrafter"/>
</dbReference>
<dbReference type="GO" id="GO:0004252">
    <property type="term" value="F:serine-type endopeptidase activity"/>
    <property type="evidence" value="ECO:0007669"/>
    <property type="project" value="UniProtKB-UniRule"/>
</dbReference>
<dbReference type="GO" id="GO:0006515">
    <property type="term" value="P:protein quality control for misfolded or incompletely synthesized proteins"/>
    <property type="evidence" value="ECO:0007669"/>
    <property type="project" value="TreeGrafter"/>
</dbReference>
<dbReference type="CDD" id="cd07017">
    <property type="entry name" value="S14_ClpP_2"/>
    <property type="match status" value="1"/>
</dbReference>
<dbReference type="FunFam" id="3.90.226.10:FF:000001">
    <property type="entry name" value="ATP-dependent Clp protease proteolytic subunit"/>
    <property type="match status" value="1"/>
</dbReference>
<dbReference type="Gene3D" id="3.90.226.10">
    <property type="entry name" value="2-enoyl-CoA Hydratase, Chain A, domain 1"/>
    <property type="match status" value="1"/>
</dbReference>
<dbReference type="HAMAP" id="MF_00444">
    <property type="entry name" value="ClpP"/>
    <property type="match status" value="1"/>
</dbReference>
<dbReference type="InterPro" id="IPR001907">
    <property type="entry name" value="ClpP"/>
</dbReference>
<dbReference type="InterPro" id="IPR029045">
    <property type="entry name" value="ClpP/crotonase-like_dom_sf"/>
</dbReference>
<dbReference type="InterPro" id="IPR023562">
    <property type="entry name" value="ClpP/TepA"/>
</dbReference>
<dbReference type="InterPro" id="IPR033135">
    <property type="entry name" value="ClpP_His_AS"/>
</dbReference>
<dbReference type="InterPro" id="IPR018215">
    <property type="entry name" value="ClpP_Ser_AS"/>
</dbReference>
<dbReference type="NCBIfam" id="NF001368">
    <property type="entry name" value="PRK00277.1"/>
    <property type="match status" value="1"/>
</dbReference>
<dbReference type="NCBIfam" id="NF009205">
    <property type="entry name" value="PRK12553.1"/>
    <property type="match status" value="1"/>
</dbReference>
<dbReference type="PANTHER" id="PTHR10381">
    <property type="entry name" value="ATP-DEPENDENT CLP PROTEASE PROTEOLYTIC SUBUNIT"/>
    <property type="match status" value="1"/>
</dbReference>
<dbReference type="PANTHER" id="PTHR10381:SF70">
    <property type="entry name" value="ATP-DEPENDENT CLP PROTEASE PROTEOLYTIC SUBUNIT"/>
    <property type="match status" value="1"/>
</dbReference>
<dbReference type="Pfam" id="PF00574">
    <property type="entry name" value="CLP_protease"/>
    <property type="match status" value="1"/>
</dbReference>
<dbReference type="PRINTS" id="PR00127">
    <property type="entry name" value="CLPPROTEASEP"/>
</dbReference>
<dbReference type="SUPFAM" id="SSF52096">
    <property type="entry name" value="ClpP/crotonase"/>
    <property type="match status" value="1"/>
</dbReference>
<dbReference type="PROSITE" id="PS00382">
    <property type="entry name" value="CLP_PROTEASE_HIS"/>
    <property type="match status" value="1"/>
</dbReference>
<dbReference type="PROSITE" id="PS00381">
    <property type="entry name" value="CLP_PROTEASE_SER"/>
    <property type="match status" value="1"/>
</dbReference>